<gene>
    <name type="ordered locus">Ppro_3567</name>
</gene>
<protein>
    <recommendedName>
        <fullName evidence="1">UPF0182 protein Ppro_3567</fullName>
    </recommendedName>
</protein>
<accession>A1AUY8</accession>
<reference key="1">
    <citation type="submission" date="2006-10" db="EMBL/GenBank/DDBJ databases">
        <title>Complete sequence of chromosome of Pelobacter propionicus DSM 2379.</title>
        <authorList>
            <consortium name="US DOE Joint Genome Institute"/>
            <person name="Copeland A."/>
            <person name="Lucas S."/>
            <person name="Lapidus A."/>
            <person name="Barry K."/>
            <person name="Detter J.C."/>
            <person name="Glavina del Rio T."/>
            <person name="Hammon N."/>
            <person name="Israni S."/>
            <person name="Dalin E."/>
            <person name="Tice H."/>
            <person name="Pitluck S."/>
            <person name="Saunders E."/>
            <person name="Brettin T."/>
            <person name="Bruce D."/>
            <person name="Han C."/>
            <person name="Tapia R."/>
            <person name="Schmutz J."/>
            <person name="Larimer F."/>
            <person name="Land M."/>
            <person name="Hauser L."/>
            <person name="Kyrpides N."/>
            <person name="Kim E."/>
            <person name="Lovley D."/>
            <person name="Richardson P."/>
        </authorList>
    </citation>
    <scope>NUCLEOTIDE SEQUENCE [LARGE SCALE GENOMIC DNA]</scope>
    <source>
        <strain>DSM 2379 / NBRC 103807 / OttBd1</strain>
    </source>
</reference>
<organism>
    <name type="scientific">Pelobacter propionicus (strain DSM 2379 / NBRC 103807 / OttBd1)</name>
    <dbReference type="NCBI Taxonomy" id="338966"/>
    <lineage>
        <taxon>Bacteria</taxon>
        <taxon>Pseudomonadati</taxon>
        <taxon>Thermodesulfobacteriota</taxon>
        <taxon>Desulfuromonadia</taxon>
        <taxon>Desulfuromonadales</taxon>
        <taxon>Desulfuromonadaceae</taxon>
        <taxon>Pelobacter</taxon>
    </lineage>
</organism>
<comment type="subcellular location">
    <subcellularLocation>
        <location evidence="1">Cell membrane</location>
        <topology evidence="1">Multi-pass membrane protein</topology>
    </subcellularLocation>
</comment>
<comment type="similarity">
    <text evidence="1">Belongs to the UPF0182 family.</text>
</comment>
<proteinExistence type="inferred from homology"/>
<sequence>MGTLLLEVTMLKNKFFPLLILVSVLLSLISYLLNLYSDWLFFDETGFSSVFTTTLYAKTGAGLLFGGLLFLFVQINLHVANRAQFPLSGMHLLGAGNLGINRDQAVRLCKPVSMLVSFVLALLAGNLGAMKWKDLLFFANRLTVGTVDPLIGKDVGFYLFSLPLLDAVKGVSGFIILAAAALATAVYYVRGGILLTERGVAIDEKVRRHLAVLVGIFACAVAAGFYLDSFKLLYADNGAFYGAGYVDVNSRLLTYRVLTFLTPLAGAMLAIGIWKGVWRMALLAPAIVVALYMLGIRVYPGVLQKFKVAPNEMALETPYIMNNITATRFGYDLEKIETVPFDVDTKLTAADIANNDATIKNIRLWDHAPLLKTYSQLQQIRTYYKFFDVDNDRYMVNGRYSQVMLSPRELSYADLPSKNWINERLIFTHGNGITFGPVSRISKEGLPEFFVKDIPAVSLADIKVSRPEIYYGELSNEYVIVKTNVPEFSYPTATGNITTTYAGTGGVPMDSLLKKALFAAKFRTEKILLSSDITKESRILYNRNINERIRTIAPFLHFDSDPYLVVDQKGRLKWIIDAYTHSTRLPYSRPLKGGINYIRNSVKTVVDAYDGSVDFYISDPDDVILKVHGRIFPKLFKPMAEMPGDLRKHVRYPHHLLQIQAAMFATYHMTDPKVFYNKENLWEIPVLGDKAMEPYYTIMKLPGEKAEEYILLLPFTPSKRDNLAAWLTARCDEPQYGKIRAYTFPRDRLIYGPKQIDARINQDSFISQQLTLWSQRGSEAIRGSLLVIPIEKSLLYVQPLFLAADKAGLPELKRVIVAFGDQLVMEENLELALQRIFGGKKAAPAATSGVSADTQASPATLAKEAVSIYEKAITLQRQGNWAAYGEELRSLEQILKKMAR</sequence>
<evidence type="ECO:0000255" key="1">
    <source>
        <dbReference type="HAMAP-Rule" id="MF_01600"/>
    </source>
</evidence>
<dbReference type="EMBL" id="CP000482">
    <property type="protein sequence ID" value="ABL01159.1"/>
    <property type="molecule type" value="Genomic_DNA"/>
</dbReference>
<dbReference type="SMR" id="A1AUY8"/>
<dbReference type="STRING" id="338966.Ppro_3567"/>
<dbReference type="KEGG" id="ppd:Ppro_3567"/>
<dbReference type="eggNOG" id="COG1615">
    <property type="taxonomic scope" value="Bacteria"/>
</dbReference>
<dbReference type="HOGENOM" id="CLU_007733_0_0_7"/>
<dbReference type="Proteomes" id="UP000006732">
    <property type="component" value="Chromosome"/>
</dbReference>
<dbReference type="GO" id="GO:0005576">
    <property type="term" value="C:extracellular region"/>
    <property type="evidence" value="ECO:0007669"/>
    <property type="project" value="TreeGrafter"/>
</dbReference>
<dbReference type="GO" id="GO:0005886">
    <property type="term" value="C:plasma membrane"/>
    <property type="evidence" value="ECO:0007669"/>
    <property type="project" value="UniProtKB-SubCell"/>
</dbReference>
<dbReference type="HAMAP" id="MF_01600">
    <property type="entry name" value="UPF0182"/>
    <property type="match status" value="1"/>
</dbReference>
<dbReference type="InterPro" id="IPR005372">
    <property type="entry name" value="UPF0182"/>
</dbReference>
<dbReference type="PANTHER" id="PTHR39344">
    <property type="entry name" value="UPF0182 PROTEIN SLL1060"/>
    <property type="match status" value="1"/>
</dbReference>
<dbReference type="PANTHER" id="PTHR39344:SF1">
    <property type="entry name" value="UPF0182 PROTEIN SLL1060"/>
    <property type="match status" value="1"/>
</dbReference>
<dbReference type="Pfam" id="PF03699">
    <property type="entry name" value="UPF0182"/>
    <property type="match status" value="1"/>
</dbReference>
<feature type="chain" id="PRO_0000291287" description="UPF0182 protein Ppro_3567">
    <location>
        <begin position="1"/>
        <end position="900"/>
    </location>
</feature>
<feature type="transmembrane region" description="Helical" evidence="1">
    <location>
        <begin position="15"/>
        <end position="35"/>
    </location>
</feature>
<feature type="transmembrane region" description="Helical" evidence="1">
    <location>
        <begin position="60"/>
        <end position="80"/>
    </location>
</feature>
<feature type="transmembrane region" description="Helical" evidence="1">
    <location>
        <begin position="112"/>
        <end position="132"/>
    </location>
</feature>
<feature type="transmembrane region" description="Helical" evidence="1">
    <location>
        <begin position="174"/>
        <end position="194"/>
    </location>
</feature>
<feature type="transmembrane region" description="Helical" evidence="1">
    <location>
        <begin position="210"/>
        <end position="230"/>
    </location>
</feature>
<feature type="transmembrane region" description="Helical" evidence="1">
    <location>
        <begin position="257"/>
        <end position="277"/>
    </location>
</feature>
<feature type="transmembrane region" description="Helical" evidence="1">
    <location>
        <begin position="282"/>
        <end position="302"/>
    </location>
</feature>
<keyword id="KW-1003">Cell membrane</keyword>
<keyword id="KW-0472">Membrane</keyword>
<keyword id="KW-1185">Reference proteome</keyword>
<keyword id="KW-0812">Transmembrane</keyword>
<keyword id="KW-1133">Transmembrane helix</keyword>
<name>Y3567_PELPD</name>